<comment type="function">
    <text evidence="1">The zeta chain is an alpha-type chain of mammalian embryonic hemoglobin.</text>
</comment>
<comment type="subunit">
    <text evidence="1">Heterotetramer of two zeta chains and beta-type chains.</text>
</comment>
<comment type="similarity">
    <text evidence="3">Belongs to the globin family.</text>
</comment>
<gene>
    <name type="primary">HBZ1</name>
</gene>
<reference key="1">
    <citation type="journal article" date="1986" name="J. Mol. Biol.">
        <title>Nucleotide sequence of the goat embryonic alpha globin gene (zeta) and linkage and evolutionary analysis of the complete alpha globin cluster.</title>
        <authorList>
            <person name="Wernke S.M."/>
            <person name="Lingrel J.B."/>
        </authorList>
    </citation>
    <scope>NUCLEOTIDE SEQUENCE [GENOMIC DNA]</scope>
</reference>
<name>HBAZ_CAPHI</name>
<organism>
    <name type="scientific">Capra hircus</name>
    <name type="common">Goat</name>
    <dbReference type="NCBI Taxonomy" id="9925"/>
    <lineage>
        <taxon>Eukaryota</taxon>
        <taxon>Metazoa</taxon>
        <taxon>Chordata</taxon>
        <taxon>Craniata</taxon>
        <taxon>Vertebrata</taxon>
        <taxon>Euteleostomi</taxon>
        <taxon>Mammalia</taxon>
        <taxon>Eutheria</taxon>
        <taxon>Laurasiatheria</taxon>
        <taxon>Artiodactyla</taxon>
        <taxon>Ruminantia</taxon>
        <taxon>Pecora</taxon>
        <taxon>Bovidae</taxon>
        <taxon>Caprinae</taxon>
        <taxon>Capra</taxon>
    </lineage>
</organism>
<proteinExistence type="inferred from homology"/>
<sequence length="142" mass="15697">MSLTRTERTIILSLWSKISTQADVIGTETLERLFSCYPQAKTYFPHFDLHSGSAQLRAHGSKVVAAVGDAVKSIDNVTSALSKLSELHAYVLRVDPVNFKFLSHCLLVTLASHFPADFTADAHAAWDKFLSIVSGVLTEKYR</sequence>
<protein>
    <recommendedName>
        <fullName>Hemoglobin subunit zeta</fullName>
    </recommendedName>
    <alternativeName>
        <fullName>Hemoglobin zeta chain</fullName>
    </alternativeName>
    <alternativeName>
        <fullName>Zeta-globin</fullName>
    </alternativeName>
</protein>
<evidence type="ECO:0000250" key="1"/>
<evidence type="ECO:0000250" key="2">
    <source>
        <dbReference type="UniProtKB" id="P02008"/>
    </source>
</evidence>
<evidence type="ECO:0000255" key="3">
    <source>
        <dbReference type="PROSITE-ProRule" id="PRU00238"/>
    </source>
</evidence>
<dbReference type="EMBL" id="X04726">
    <property type="protein sequence ID" value="CAA28435.1"/>
    <property type="molecule type" value="Genomic_DNA"/>
</dbReference>
<dbReference type="EMBL" id="X04862">
    <property type="protein sequence ID" value="CAA28435.1"/>
    <property type="status" value="JOINED"/>
    <property type="molecule type" value="Genomic_DNA"/>
</dbReference>
<dbReference type="PIR" id="A25555">
    <property type="entry name" value="A25555"/>
</dbReference>
<dbReference type="SMR" id="P13786"/>
<dbReference type="STRING" id="9925.ENSCHIP00000019992"/>
<dbReference type="Ensembl" id="ENSCHIT00000027816.1">
    <property type="protein sequence ID" value="ENSCHIP00000019992.1"/>
    <property type="gene ID" value="ENSCHIG00000018800.1"/>
</dbReference>
<dbReference type="Ensembl" id="ENSCHIT00020040941">
    <property type="protein sequence ID" value="ENSCHIP00020030573"/>
    <property type="gene ID" value="ENSCHIG00020019758"/>
</dbReference>
<dbReference type="Ensembl" id="ENSCHIT00040055627">
    <property type="protein sequence ID" value="ENSCHIP00040044618"/>
    <property type="gene ID" value="ENSCHIG00040025875"/>
</dbReference>
<dbReference type="GeneID" id="108633874"/>
<dbReference type="KEGG" id="chx:108633874"/>
<dbReference type="GeneTree" id="ENSGT00940000158623"/>
<dbReference type="OMA" id="DILCENC"/>
<dbReference type="OrthoDB" id="8751793at2759"/>
<dbReference type="Proteomes" id="UP000291000">
    <property type="component" value="Chromosome 25"/>
</dbReference>
<dbReference type="Proteomes" id="UP000694566">
    <property type="component" value="Unplaced"/>
</dbReference>
<dbReference type="Bgee" id="ENSCHIG00000018800">
    <property type="expression patterns" value="Expressed in uterus and 2 other cell types or tissues"/>
</dbReference>
<dbReference type="GO" id="GO:0072562">
    <property type="term" value="C:blood microparticle"/>
    <property type="evidence" value="ECO:0007669"/>
    <property type="project" value="TreeGrafter"/>
</dbReference>
<dbReference type="GO" id="GO:0031838">
    <property type="term" value="C:haptoglobin-hemoglobin complex"/>
    <property type="evidence" value="ECO:0007669"/>
    <property type="project" value="TreeGrafter"/>
</dbReference>
<dbReference type="GO" id="GO:0005833">
    <property type="term" value="C:hemoglobin complex"/>
    <property type="evidence" value="ECO:0007669"/>
    <property type="project" value="InterPro"/>
</dbReference>
<dbReference type="GO" id="GO:0031720">
    <property type="term" value="F:haptoglobin binding"/>
    <property type="evidence" value="ECO:0007669"/>
    <property type="project" value="TreeGrafter"/>
</dbReference>
<dbReference type="GO" id="GO:0020037">
    <property type="term" value="F:heme binding"/>
    <property type="evidence" value="ECO:0007669"/>
    <property type="project" value="InterPro"/>
</dbReference>
<dbReference type="GO" id="GO:0005506">
    <property type="term" value="F:iron ion binding"/>
    <property type="evidence" value="ECO:0007669"/>
    <property type="project" value="InterPro"/>
</dbReference>
<dbReference type="GO" id="GO:0043177">
    <property type="term" value="F:organic acid binding"/>
    <property type="evidence" value="ECO:0007669"/>
    <property type="project" value="TreeGrafter"/>
</dbReference>
<dbReference type="GO" id="GO:0019825">
    <property type="term" value="F:oxygen binding"/>
    <property type="evidence" value="ECO:0007669"/>
    <property type="project" value="InterPro"/>
</dbReference>
<dbReference type="GO" id="GO:0005344">
    <property type="term" value="F:oxygen carrier activity"/>
    <property type="evidence" value="ECO:0007669"/>
    <property type="project" value="UniProtKB-KW"/>
</dbReference>
<dbReference type="GO" id="GO:0004601">
    <property type="term" value="F:peroxidase activity"/>
    <property type="evidence" value="ECO:0007669"/>
    <property type="project" value="TreeGrafter"/>
</dbReference>
<dbReference type="GO" id="GO:0042744">
    <property type="term" value="P:hydrogen peroxide catabolic process"/>
    <property type="evidence" value="ECO:0007669"/>
    <property type="project" value="TreeGrafter"/>
</dbReference>
<dbReference type="CDD" id="cd08927">
    <property type="entry name" value="Hb-alpha-like"/>
    <property type="match status" value="1"/>
</dbReference>
<dbReference type="FunFam" id="1.10.490.10:FF:000002">
    <property type="entry name" value="Hemoglobin subunit alpha"/>
    <property type="match status" value="1"/>
</dbReference>
<dbReference type="Gene3D" id="1.10.490.10">
    <property type="entry name" value="Globins"/>
    <property type="match status" value="1"/>
</dbReference>
<dbReference type="InterPro" id="IPR000971">
    <property type="entry name" value="Globin"/>
</dbReference>
<dbReference type="InterPro" id="IPR009050">
    <property type="entry name" value="Globin-like_sf"/>
</dbReference>
<dbReference type="InterPro" id="IPR012292">
    <property type="entry name" value="Globin/Proto"/>
</dbReference>
<dbReference type="InterPro" id="IPR002338">
    <property type="entry name" value="Hemoglobin_a-typ"/>
</dbReference>
<dbReference type="InterPro" id="IPR050056">
    <property type="entry name" value="Hemoglobin_oxygen_transport"/>
</dbReference>
<dbReference type="InterPro" id="IPR002340">
    <property type="entry name" value="Hemoglobin_zeta"/>
</dbReference>
<dbReference type="PANTHER" id="PTHR11442">
    <property type="entry name" value="HEMOGLOBIN FAMILY MEMBER"/>
    <property type="match status" value="1"/>
</dbReference>
<dbReference type="PANTHER" id="PTHR11442:SF41">
    <property type="entry name" value="HEMOGLOBIN SUBUNIT ZETA"/>
    <property type="match status" value="1"/>
</dbReference>
<dbReference type="Pfam" id="PF00042">
    <property type="entry name" value="Globin"/>
    <property type="match status" value="1"/>
</dbReference>
<dbReference type="PRINTS" id="PR00612">
    <property type="entry name" value="ALPHAHAEM"/>
</dbReference>
<dbReference type="PRINTS" id="PR00816">
    <property type="entry name" value="ZETAHAEM"/>
</dbReference>
<dbReference type="SUPFAM" id="SSF46458">
    <property type="entry name" value="Globin-like"/>
    <property type="match status" value="1"/>
</dbReference>
<dbReference type="PROSITE" id="PS01033">
    <property type="entry name" value="GLOBIN"/>
    <property type="match status" value="1"/>
</dbReference>
<accession>P13786</accession>
<feature type="initiator methionine" description="Removed" evidence="2">
    <location>
        <position position="1"/>
    </location>
</feature>
<feature type="chain" id="PRO_0000052849" description="Hemoglobin subunit zeta">
    <location>
        <begin position="2"/>
        <end position="142"/>
    </location>
</feature>
<feature type="domain" description="Globin" evidence="3">
    <location>
        <begin position="2"/>
        <end position="142"/>
    </location>
</feature>
<feature type="binding site" description="distal binding residue">
    <location>
        <position position="59"/>
    </location>
    <ligand>
        <name>heme b</name>
        <dbReference type="ChEBI" id="CHEBI:60344"/>
    </ligand>
    <ligandPart>
        <name>Fe</name>
        <dbReference type="ChEBI" id="CHEBI:18248"/>
    </ligandPart>
</feature>
<feature type="binding site" description="proximal binding residue">
    <location>
        <position position="88"/>
    </location>
    <ligand>
        <name>heme b</name>
        <dbReference type="ChEBI" id="CHEBI:60344"/>
    </ligand>
    <ligandPart>
        <name>Fe</name>
        <dbReference type="ChEBI" id="CHEBI:18248"/>
    </ligandPart>
</feature>
<feature type="modified residue" description="N-acetylserine" evidence="2">
    <location>
        <position position="2"/>
    </location>
</feature>
<feature type="modified residue" description="Phosphothreonine" evidence="2">
    <location>
        <position position="29"/>
    </location>
</feature>
<feature type="modified residue" description="Phosphoserine" evidence="2">
    <location>
        <position position="53"/>
    </location>
</feature>
<feature type="modified residue" description="Phosphoserine" evidence="2">
    <location>
        <position position="73"/>
    </location>
</feature>
<feature type="modified residue" description="Phosphoserine" evidence="2">
    <location>
        <position position="82"/>
    </location>
</feature>
<keyword id="KW-0007">Acetylation</keyword>
<keyword id="KW-0349">Heme</keyword>
<keyword id="KW-0408">Iron</keyword>
<keyword id="KW-0479">Metal-binding</keyword>
<keyword id="KW-0561">Oxygen transport</keyword>
<keyword id="KW-0597">Phosphoprotein</keyword>
<keyword id="KW-1185">Reference proteome</keyword>
<keyword id="KW-0813">Transport</keyword>